<protein>
    <recommendedName>
        <fullName>Metalloprotease AF_0655</fullName>
        <ecNumber>3.4.-.-</ecNumber>
    </recommendedName>
</protein>
<feature type="chain" id="PRO_0000142363" description="Metalloprotease AF_0655">
    <location>
        <begin position="1"/>
        <end position="425"/>
    </location>
</feature>
<evidence type="ECO:0000250" key="1"/>
<evidence type="ECO:0000305" key="2"/>
<accession>O29602</accession>
<comment type="function">
    <text evidence="1">Probable metalloprotease.</text>
</comment>
<comment type="similarity">
    <text evidence="2">Belongs to the peptidase U62 family.</text>
</comment>
<sequence length="425" mass="47188">MRFWDIRRVENVSLNLQLENGKLEKPRYNKSTSKGFRVLKNGFWGIFEGNVADDEGLRQAEKNAFTQGDGDIEEIATKGRYRMRVKRDPQDMSIEEKVELLKDLEKIIRDVCVSTKLVYFENRRVLQYRDSCGSEVEYEVLRTGVSIMGVGKGRSLQFLSKRQMRVGGYEVLDGVDEKAYEIVEVLPKLVNALAPPSGEMSVVMDSSLAGVFVHEAFGHAVEADHVLQGATVLKGRLNEKVADESVTIIDDPTLPEFGFFPFDDEGVRAEKKVIVEDGVLKSFLHSRETAKKLGGVAGNARSQGVDVPIVRMSNTYIDTHHYSFDELLEECRDGVYLVGSRGGETNPATGYFHFNAQYGYLIKNGELAEMVRDVSLSGNTLEILRNVKIGREIEFDPGFCGKAGQLVPVSDGSPPVLCRATVGGA</sequence>
<dbReference type="EC" id="3.4.-.-"/>
<dbReference type="EMBL" id="AE000782">
    <property type="protein sequence ID" value="AAB90585.1"/>
    <property type="molecule type" value="Genomic_DNA"/>
</dbReference>
<dbReference type="PIR" id="G69331">
    <property type="entry name" value="G69331"/>
</dbReference>
<dbReference type="RefSeq" id="WP_010878158.1">
    <property type="nucleotide sequence ID" value="NC_000917.1"/>
</dbReference>
<dbReference type="SMR" id="O29602"/>
<dbReference type="STRING" id="224325.AF_0655"/>
<dbReference type="PaxDb" id="224325-AF_0655"/>
<dbReference type="DNASU" id="1483873"/>
<dbReference type="EnsemblBacteria" id="AAB90585">
    <property type="protein sequence ID" value="AAB90585"/>
    <property type="gene ID" value="AF_0655"/>
</dbReference>
<dbReference type="KEGG" id="afu:AF_0655"/>
<dbReference type="eggNOG" id="arCOG00321">
    <property type="taxonomic scope" value="Archaea"/>
</dbReference>
<dbReference type="HOGENOM" id="CLU_026425_1_2_2"/>
<dbReference type="OrthoDB" id="98233at2157"/>
<dbReference type="PhylomeDB" id="O29602"/>
<dbReference type="Proteomes" id="UP000002199">
    <property type="component" value="Chromosome"/>
</dbReference>
<dbReference type="GO" id="GO:0005829">
    <property type="term" value="C:cytosol"/>
    <property type="evidence" value="ECO:0007669"/>
    <property type="project" value="TreeGrafter"/>
</dbReference>
<dbReference type="GO" id="GO:0008237">
    <property type="term" value="F:metallopeptidase activity"/>
    <property type="evidence" value="ECO:0007669"/>
    <property type="project" value="UniProtKB-KW"/>
</dbReference>
<dbReference type="GO" id="GO:0006508">
    <property type="term" value="P:proteolysis"/>
    <property type="evidence" value="ECO:0007669"/>
    <property type="project" value="UniProtKB-KW"/>
</dbReference>
<dbReference type="Gene3D" id="3.30.2290.10">
    <property type="entry name" value="PmbA/TldD superfamily"/>
    <property type="match status" value="1"/>
</dbReference>
<dbReference type="InterPro" id="IPR045569">
    <property type="entry name" value="Metalloprtase-TldD/E_C"/>
</dbReference>
<dbReference type="InterPro" id="IPR045570">
    <property type="entry name" value="Metalloprtase-TldD/E_cen_dom"/>
</dbReference>
<dbReference type="InterPro" id="IPR002510">
    <property type="entry name" value="Metalloprtase-TldD/E_N"/>
</dbReference>
<dbReference type="InterPro" id="IPR051463">
    <property type="entry name" value="Peptidase_U62_metallo"/>
</dbReference>
<dbReference type="InterPro" id="IPR025502">
    <property type="entry name" value="TldD"/>
</dbReference>
<dbReference type="InterPro" id="IPR035068">
    <property type="entry name" value="TldD/PmbA_N"/>
</dbReference>
<dbReference type="InterPro" id="IPR036059">
    <property type="entry name" value="TldD/PmbA_sf"/>
</dbReference>
<dbReference type="PANTHER" id="PTHR30624:SF0">
    <property type="entry name" value="METALLOPROTEASE SLR0863"/>
    <property type="match status" value="1"/>
</dbReference>
<dbReference type="PANTHER" id="PTHR30624">
    <property type="entry name" value="UNCHARACTERIZED PROTEIN TLDD AND PMBA"/>
    <property type="match status" value="1"/>
</dbReference>
<dbReference type="Pfam" id="PF01523">
    <property type="entry name" value="PmbA_TldD_1st"/>
    <property type="match status" value="1"/>
</dbReference>
<dbReference type="Pfam" id="PF19290">
    <property type="entry name" value="PmbA_TldD_2nd"/>
    <property type="match status" value="1"/>
</dbReference>
<dbReference type="Pfam" id="PF19289">
    <property type="entry name" value="PmbA_TldD_3rd"/>
    <property type="match status" value="1"/>
</dbReference>
<dbReference type="PIRSF" id="PIRSF004919">
    <property type="entry name" value="TldD"/>
    <property type="match status" value="1"/>
</dbReference>
<dbReference type="SUPFAM" id="SSF111283">
    <property type="entry name" value="Putative modulator of DNA gyrase, PmbA/TldD"/>
    <property type="match status" value="1"/>
</dbReference>
<organism>
    <name type="scientific">Archaeoglobus fulgidus (strain ATCC 49558 / DSM 4304 / JCM 9628 / NBRC 100126 / VC-16)</name>
    <dbReference type="NCBI Taxonomy" id="224325"/>
    <lineage>
        <taxon>Archaea</taxon>
        <taxon>Methanobacteriati</taxon>
        <taxon>Methanobacteriota</taxon>
        <taxon>Archaeoglobi</taxon>
        <taxon>Archaeoglobales</taxon>
        <taxon>Archaeoglobaceae</taxon>
        <taxon>Archaeoglobus</taxon>
    </lineage>
</organism>
<name>Y655_ARCFU</name>
<proteinExistence type="inferred from homology"/>
<keyword id="KW-0378">Hydrolase</keyword>
<keyword id="KW-0482">Metalloprotease</keyword>
<keyword id="KW-0645">Protease</keyword>
<keyword id="KW-1185">Reference proteome</keyword>
<gene>
    <name type="ordered locus">AF_0655</name>
</gene>
<reference key="1">
    <citation type="journal article" date="1997" name="Nature">
        <title>The complete genome sequence of the hyperthermophilic, sulphate-reducing archaeon Archaeoglobus fulgidus.</title>
        <authorList>
            <person name="Klenk H.-P."/>
            <person name="Clayton R.A."/>
            <person name="Tomb J.-F."/>
            <person name="White O."/>
            <person name="Nelson K.E."/>
            <person name="Ketchum K.A."/>
            <person name="Dodson R.J."/>
            <person name="Gwinn M.L."/>
            <person name="Hickey E.K."/>
            <person name="Peterson J.D."/>
            <person name="Richardson D.L."/>
            <person name="Kerlavage A.R."/>
            <person name="Graham D.E."/>
            <person name="Kyrpides N.C."/>
            <person name="Fleischmann R.D."/>
            <person name="Quackenbush J."/>
            <person name="Lee N.H."/>
            <person name="Sutton G.G."/>
            <person name="Gill S.R."/>
            <person name="Kirkness E.F."/>
            <person name="Dougherty B.A."/>
            <person name="McKenney K."/>
            <person name="Adams M.D."/>
            <person name="Loftus B.J."/>
            <person name="Peterson S.N."/>
            <person name="Reich C.I."/>
            <person name="McNeil L.K."/>
            <person name="Badger J.H."/>
            <person name="Glodek A."/>
            <person name="Zhou L."/>
            <person name="Overbeek R."/>
            <person name="Gocayne J.D."/>
            <person name="Weidman J.F."/>
            <person name="McDonald L.A."/>
            <person name="Utterback T.R."/>
            <person name="Cotton M.D."/>
            <person name="Spriggs T."/>
            <person name="Artiach P."/>
            <person name="Kaine B.P."/>
            <person name="Sykes S.M."/>
            <person name="Sadow P.W."/>
            <person name="D'Andrea K.P."/>
            <person name="Bowman C."/>
            <person name="Fujii C."/>
            <person name="Garland S.A."/>
            <person name="Mason T.M."/>
            <person name="Olsen G.J."/>
            <person name="Fraser C.M."/>
            <person name="Smith H.O."/>
            <person name="Woese C.R."/>
            <person name="Venter J.C."/>
        </authorList>
    </citation>
    <scope>NUCLEOTIDE SEQUENCE [LARGE SCALE GENOMIC DNA]</scope>
    <source>
        <strain>ATCC 49558 / DSM 4304 / JCM 9628 / NBRC 100126 / VC-16</strain>
    </source>
</reference>